<name>LTX2A_LACTA</name>
<evidence type="ECO:0000250" key="1">
    <source>
        <dbReference type="UniProtKB" id="P58604"/>
    </source>
</evidence>
<evidence type="ECO:0000255" key="2"/>
<evidence type="ECO:0000269" key="3">
    <source>
    </source>
</evidence>
<evidence type="ECO:0000269" key="4">
    <source>
    </source>
</evidence>
<evidence type="ECO:0000303" key="5">
    <source>
    </source>
</evidence>
<evidence type="ECO:0000303" key="6">
    <source>
    </source>
</evidence>
<evidence type="ECO:0000305" key="7"/>
<evidence type="ECO:0000305" key="8">
    <source>
    </source>
</evidence>
<dbReference type="EMBL" id="JQ513644">
    <property type="protein sequence ID" value="AFX65329.1"/>
    <property type="molecule type" value="mRNA"/>
</dbReference>
<dbReference type="SMR" id="B3EWF4"/>
<dbReference type="ArachnoServer" id="AS001731">
    <property type="toxin name" value="U2-zodatoxin-Lt2a"/>
</dbReference>
<dbReference type="GO" id="GO:0005576">
    <property type="term" value="C:extracellular region"/>
    <property type="evidence" value="ECO:0007669"/>
    <property type="project" value="UniProtKB-SubCell"/>
</dbReference>
<dbReference type="GO" id="GO:0090729">
    <property type="term" value="F:toxin activity"/>
    <property type="evidence" value="ECO:0007669"/>
    <property type="project" value="UniProtKB-KW"/>
</dbReference>
<feature type="signal peptide" evidence="2">
    <location>
        <begin position="1"/>
        <end position="19"/>
    </location>
</feature>
<feature type="propeptide" id="PRO_0000421845" description="Removed in mature form" evidence="3">
    <location>
        <begin position="20"/>
        <end position="37"/>
    </location>
</feature>
<feature type="peptide" id="PRO_0000421846" description="Latartoxin-2a">
    <location>
        <begin position="38"/>
        <end position="108"/>
    </location>
</feature>
<feature type="short sequence motif" description="Processing quadruplet motif" evidence="6">
    <location>
        <begin position="34"/>
        <end position="37"/>
    </location>
</feature>
<feature type="modified residue" description="Valine amide" evidence="3">
    <location>
        <position position="108"/>
    </location>
</feature>
<feature type="disulfide bond" evidence="1">
    <location>
        <begin position="39"/>
        <end position="56"/>
    </location>
</feature>
<feature type="disulfide bond" evidence="1">
    <location>
        <begin position="46"/>
        <end position="67"/>
    </location>
</feature>
<feature type="disulfide bond" evidence="1">
    <location>
        <begin position="55"/>
        <end position="81"/>
    </location>
</feature>
<feature type="disulfide bond" evidence="1">
    <location>
        <begin position="69"/>
        <end position="79"/>
    </location>
</feature>
<feature type="disulfide bond" evidence="5">
    <location>
        <begin position="72"/>
        <end position="93"/>
    </location>
</feature>
<accession>B3EWF4</accession>
<accession>K7WSN2</accession>
<protein>
    <recommendedName>
        <fullName evidence="5">Latartoxin-2a</fullName>
        <shortName evidence="5">LtTx-2a</shortName>
    </recommendedName>
</protein>
<reference key="1">
    <citation type="journal article" date="2013" name="Biochim. Biophys. Acta">
        <title>Cysteine-rich toxins from Lachesana tarabaevi spider venom with amphiphilic C-terminal segments.</title>
        <authorList>
            <person name="Kuzmenkov A.I."/>
            <person name="Fedorova I.M."/>
            <person name="Vassilevski A.A."/>
            <person name="Grishin E.V."/>
        </authorList>
    </citation>
    <scope>NUCLEOTIDE SEQUENCE [MRNA]</scope>
    <scope>PROTEIN SEQUENCE OF 38-108</scope>
    <scope>FUNCTION</scope>
    <scope>SUBCELLULAR LOCATION</scope>
    <scope>DISULFIDE BONDS</scope>
    <scope>MASS SPECTROMETRY</scope>
    <scope>TOXIC DOSE</scope>
    <scope>AMIDATION AT VAL-108</scope>
    <source>
        <tissue>Venom</tissue>
        <tissue>Venom gland</tissue>
    </source>
</reference>
<reference key="2">
    <citation type="journal article" date="2016" name="Biochem. J.">
        <title>Lachesana tarabaevi, an expert in membrane-active toxins.</title>
        <authorList>
            <person name="Kuzmenkov A.I."/>
            <person name="Sachkova M.Y."/>
            <person name="Kovalchuk S.I."/>
            <person name="Grishin E.V."/>
            <person name="Vassilevski A.A."/>
        </authorList>
    </citation>
    <scope>SUBCELLULAR LOCATION</scope>
    <scope>PQM MOTIF</scope>
    <scope>MASS SPECTROMETRY</scope>
    <source>
        <tissue>Venom</tissue>
    </source>
</reference>
<comment type="function">
    <text evidence="3">Insect toxin. Causes paralysis in larvae of C.vicina by depolarizing membranes at the neuromuscular junction.</text>
</comment>
<comment type="subcellular location">
    <subcellularLocation>
        <location evidence="3 4">Secreted</location>
    </subcellularLocation>
</comment>
<comment type="tissue specificity">
    <text evidence="8">Expressed by the venom gland.</text>
</comment>
<comment type="domain">
    <text evidence="7">The presence of a 'disulfide through disulfide knot' structurally defines this protein as a knottin.</text>
</comment>
<comment type="PTM">
    <text evidence="3">Contains 5 disulfide bonds.</text>
</comment>
<comment type="PTM">
    <text evidence="6">Cleavage of the propeptide depends on the processing quadruplet motif (XXXR, with at least one of X being E).</text>
</comment>
<comment type="mass spectrometry" mass="8333.8" error="0.5" method="MALDI" evidence="3"/>
<comment type="mass spectrometry" mass="8334.0" method="MALDI" evidence="4"/>
<comment type="toxic dose">
    <text evidence="3">LD(50) is 35 ug/g in flesh fly larvae (S.carnaria).</text>
</comment>
<comment type="toxic dose">
    <text evidence="3">LD(50) is 30 ug/g in house crickets (Acheta domesticus).</text>
</comment>
<comment type="similarity">
    <text evidence="2">Belongs to the neurotoxin 19 (CSTX) family. 11 (latartoxin) subfamily.</text>
</comment>
<proteinExistence type="evidence at protein level"/>
<sequence length="109" mass="12585">MKVLVIIALCLVAFQSALSKKIENFESYIEDLKSEARECIPLYNDCTAFKYNNNCCKDPEKKYQYKCSCIVCKEGKEQCTCQRKETVESMMKCVRFVKKVGEKVIEKVG</sequence>
<organism>
    <name type="scientific">Lachesana tarabaevi</name>
    <name type="common">Spider</name>
    <dbReference type="NCBI Taxonomy" id="379576"/>
    <lineage>
        <taxon>Eukaryota</taxon>
        <taxon>Metazoa</taxon>
        <taxon>Ecdysozoa</taxon>
        <taxon>Arthropoda</taxon>
        <taxon>Chelicerata</taxon>
        <taxon>Arachnida</taxon>
        <taxon>Araneae</taxon>
        <taxon>Araneomorphae</taxon>
        <taxon>Entelegynae</taxon>
        <taxon>Entelegynae incertae sedis</taxon>
        <taxon>Zodariidae</taxon>
        <taxon>Lachesana</taxon>
    </lineage>
</organism>
<keyword id="KW-0027">Amidation</keyword>
<keyword id="KW-0903">Direct protein sequencing</keyword>
<keyword id="KW-1015">Disulfide bond</keyword>
<keyword id="KW-0960">Knottin</keyword>
<keyword id="KW-0528">Neurotoxin</keyword>
<keyword id="KW-0964">Secreted</keyword>
<keyword id="KW-0732">Signal</keyword>
<keyword id="KW-0800">Toxin</keyword>